<keyword id="KW-0067">ATP-binding</keyword>
<keyword id="KW-0315">Glutamine amidotransferase</keyword>
<keyword id="KW-0436">Ligase</keyword>
<keyword id="KW-0460">Magnesium</keyword>
<keyword id="KW-0479">Metal-binding</keyword>
<keyword id="KW-0547">Nucleotide-binding</keyword>
<keyword id="KW-0665">Pyrimidine biosynthesis</keyword>
<keyword id="KW-1185">Reference proteome</keyword>
<dbReference type="EC" id="6.3.4.2" evidence="1"/>
<dbReference type="EMBL" id="CP000254">
    <property type="protein sequence ID" value="ABD42228.1"/>
    <property type="molecule type" value="Genomic_DNA"/>
</dbReference>
<dbReference type="RefSeq" id="WP_011449486.1">
    <property type="nucleotide sequence ID" value="NC_007796.1"/>
</dbReference>
<dbReference type="SMR" id="Q2FSE6"/>
<dbReference type="FunCoup" id="Q2FSE6">
    <property type="interactions" value="202"/>
</dbReference>
<dbReference type="STRING" id="323259.Mhun_2528"/>
<dbReference type="EnsemblBacteria" id="ABD42228">
    <property type="protein sequence ID" value="ABD42228"/>
    <property type="gene ID" value="Mhun_2528"/>
</dbReference>
<dbReference type="GeneID" id="3922314"/>
<dbReference type="KEGG" id="mhu:Mhun_2528"/>
<dbReference type="eggNOG" id="arCOG00063">
    <property type="taxonomic scope" value="Archaea"/>
</dbReference>
<dbReference type="HOGENOM" id="CLU_011675_5_0_2"/>
<dbReference type="InParanoid" id="Q2FSE6"/>
<dbReference type="OrthoDB" id="52769at2157"/>
<dbReference type="UniPathway" id="UPA00159">
    <property type="reaction ID" value="UER00277"/>
</dbReference>
<dbReference type="Proteomes" id="UP000001941">
    <property type="component" value="Chromosome"/>
</dbReference>
<dbReference type="GO" id="GO:0005524">
    <property type="term" value="F:ATP binding"/>
    <property type="evidence" value="ECO:0007669"/>
    <property type="project" value="UniProtKB-KW"/>
</dbReference>
<dbReference type="GO" id="GO:0003883">
    <property type="term" value="F:CTP synthase activity"/>
    <property type="evidence" value="ECO:0007669"/>
    <property type="project" value="UniProtKB-UniRule"/>
</dbReference>
<dbReference type="GO" id="GO:0004359">
    <property type="term" value="F:glutaminase activity"/>
    <property type="evidence" value="ECO:0007669"/>
    <property type="project" value="RHEA"/>
</dbReference>
<dbReference type="GO" id="GO:0042802">
    <property type="term" value="F:identical protein binding"/>
    <property type="evidence" value="ECO:0007669"/>
    <property type="project" value="TreeGrafter"/>
</dbReference>
<dbReference type="GO" id="GO:0046872">
    <property type="term" value="F:metal ion binding"/>
    <property type="evidence" value="ECO:0007669"/>
    <property type="project" value="UniProtKB-KW"/>
</dbReference>
<dbReference type="GO" id="GO:0044210">
    <property type="term" value="P:'de novo' CTP biosynthetic process"/>
    <property type="evidence" value="ECO:0007669"/>
    <property type="project" value="UniProtKB-UniRule"/>
</dbReference>
<dbReference type="GO" id="GO:0019856">
    <property type="term" value="P:pyrimidine nucleobase biosynthetic process"/>
    <property type="evidence" value="ECO:0007669"/>
    <property type="project" value="TreeGrafter"/>
</dbReference>
<dbReference type="CDD" id="cd03113">
    <property type="entry name" value="CTPS_N"/>
    <property type="match status" value="1"/>
</dbReference>
<dbReference type="CDD" id="cd01746">
    <property type="entry name" value="GATase1_CTP_Synthase"/>
    <property type="match status" value="1"/>
</dbReference>
<dbReference type="FunFam" id="3.40.50.300:FF:000009">
    <property type="entry name" value="CTP synthase"/>
    <property type="match status" value="1"/>
</dbReference>
<dbReference type="FunFam" id="3.40.50.880:FF:000002">
    <property type="entry name" value="CTP synthase"/>
    <property type="match status" value="1"/>
</dbReference>
<dbReference type="Gene3D" id="3.40.50.880">
    <property type="match status" value="1"/>
</dbReference>
<dbReference type="Gene3D" id="3.40.50.300">
    <property type="entry name" value="P-loop containing nucleotide triphosphate hydrolases"/>
    <property type="match status" value="1"/>
</dbReference>
<dbReference type="HAMAP" id="MF_01227">
    <property type="entry name" value="PyrG"/>
    <property type="match status" value="1"/>
</dbReference>
<dbReference type="InterPro" id="IPR029062">
    <property type="entry name" value="Class_I_gatase-like"/>
</dbReference>
<dbReference type="InterPro" id="IPR004468">
    <property type="entry name" value="CTP_synthase"/>
</dbReference>
<dbReference type="InterPro" id="IPR017456">
    <property type="entry name" value="CTP_synthase_N"/>
</dbReference>
<dbReference type="InterPro" id="IPR017926">
    <property type="entry name" value="GATASE"/>
</dbReference>
<dbReference type="InterPro" id="IPR033828">
    <property type="entry name" value="GATase1_CTP_Synthase"/>
</dbReference>
<dbReference type="InterPro" id="IPR027417">
    <property type="entry name" value="P-loop_NTPase"/>
</dbReference>
<dbReference type="NCBIfam" id="NF003792">
    <property type="entry name" value="PRK05380.1"/>
    <property type="match status" value="1"/>
</dbReference>
<dbReference type="NCBIfam" id="TIGR00337">
    <property type="entry name" value="PyrG"/>
    <property type="match status" value="1"/>
</dbReference>
<dbReference type="PANTHER" id="PTHR11550">
    <property type="entry name" value="CTP SYNTHASE"/>
    <property type="match status" value="1"/>
</dbReference>
<dbReference type="PANTHER" id="PTHR11550:SF0">
    <property type="entry name" value="CTP SYNTHASE-RELATED"/>
    <property type="match status" value="1"/>
</dbReference>
<dbReference type="Pfam" id="PF06418">
    <property type="entry name" value="CTP_synth_N"/>
    <property type="match status" value="1"/>
</dbReference>
<dbReference type="Pfam" id="PF00117">
    <property type="entry name" value="GATase"/>
    <property type="match status" value="1"/>
</dbReference>
<dbReference type="SUPFAM" id="SSF52317">
    <property type="entry name" value="Class I glutamine amidotransferase-like"/>
    <property type="match status" value="1"/>
</dbReference>
<dbReference type="SUPFAM" id="SSF52540">
    <property type="entry name" value="P-loop containing nucleoside triphosphate hydrolases"/>
    <property type="match status" value="1"/>
</dbReference>
<dbReference type="PROSITE" id="PS51273">
    <property type="entry name" value="GATASE_TYPE_1"/>
    <property type="match status" value="1"/>
</dbReference>
<accession>Q2FSE6</accession>
<protein>
    <recommendedName>
        <fullName evidence="1">CTP synthase</fullName>
        <ecNumber evidence="1">6.3.4.2</ecNumber>
    </recommendedName>
    <alternativeName>
        <fullName evidence="1">Cytidine 5'-triphosphate synthase</fullName>
    </alternativeName>
    <alternativeName>
        <fullName evidence="1">Cytidine triphosphate synthetase</fullName>
        <shortName evidence="1">CTP synthetase</shortName>
        <shortName evidence="1">CTPS</shortName>
    </alternativeName>
    <alternativeName>
        <fullName evidence="1">UTP--ammonia ligase</fullName>
    </alternativeName>
</protein>
<comment type="function">
    <text evidence="1">Catalyzes the ATP-dependent amination of UTP to CTP with either L-glutamine or ammonia as the source of nitrogen. Regulates intracellular CTP levels through interactions with the four ribonucleotide triphosphates.</text>
</comment>
<comment type="catalytic activity">
    <reaction evidence="1">
        <text>UTP + L-glutamine + ATP + H2O = CTP + L-glutamate + ADP + phosphate + 2 H(+)</text>
        <dbReference type="Rhea" id="RHEA:26426"/>
        <dbReference type="ChEBI" id="CHEBI:15377"/>
        <dbReference type="ChEBI" id="CHEBI:15378"/>
        <dbReference type="ChEBI" id="CHEBI:29985"/>
        <dbReference type="ChEBI" id="CHEBI:30616"/>
        <dbReference type="ChEBI" id="CHEBI:37563"/>
        <dbReference type="ChEBI" id="CHEBI:43474"/>
        <dbReference type="ChEBI" id="CHEBI:46398"/>
        <dbReference type="ChEBI" id="CHEBI:58359"/>
        <dbReference type="ChEBI" id="CHEBI:456216"/>
        <dbReference type="EC" id="6.3.4.2"/>
    </reaction>
</comment>
<comment type="catalytic activity">
    <reaction evidence="1">
        <text>L-glutamine + H2O = L-glutamate + NH4(+)</text>
        <dbReference type="Rhea" id="RHEA:15889"/>
        <dbReference type="ChEBI" id="CHEBI:15377"/>
        <dbReference type="ChEBI" id="CHEBI:28938"/>
        <dbReference type="ChEBI" id="CHEBI:29985"/>
        <dbReference type="ChEBI" id="CHEBI:58359"/>
    </reaction>
</comment>
<comment type="catalytic activity">
    <reaction evidence="1">
        <text>UTP + NH4(+) + ATP = CTP + ADP + phosphate + 2 H(+)</text>
        <dbReference type="Rhea" id="RHEA:16597"/>
        <dbReference type="ChEBI" id="CHEBI:15378"/>
        <dbReference type="ChEBI" id="CHEBI:28938"/>
        <dbReference type="ChEBI" id="CHEBI:30616"/>
        <dbReference type="ChEBI" id="CHEBI:37563"/>
        <dbReference type="ChEBI" id="CHEBI:43474"/>
        <dbReference type="ChEBI" id="CHEBI:46398"/>
        <dbReference type="ChEBI" id="CHEBI:456216"/>
    </reaction>
</comment>
<comment type="activity regulation">
    <text evidence="1">Allosterically activated by GTP, when glutamine is the substrate; GTP has no effect on the reaction when ammonia is the substrate. The allosteric effector GTP functions by stabilizing the protein conformation that binds the tetrahedral intermediate(s) formed during glutamine hydrolysis. Inhibited by the product CTP, via allosteric rather than competitive inhibition.</text>
</comment>
<comment type="pathway">
    <text evidence="1">Pyrimidine metabolism; CTP biosynthesis via de novo pathway; CTP from UDP: step 2/2.</text>
</comment>
<comment type="subunit">
    <text evidence="1">Homotetramer.</text>
</comment>
<comment type="miscellaneous">
    <text evidence="1">CTPSs have evolved a hybrid strategy for distinguishing between UTP and CTP. The overlapping regions of the product feedback inhibitory and substrate sites recognize a common feature in both compounds, the triphosphate moiety. To differentiate isosteric substrate and product pyrimidine rings, an additional pocket far from the expected kinase/ligase catalytic site, specifically recognizes the cytosine and ribose portions of the product inhibitor.</text>
</comment>
<comment type="similarity">
    <text evidence="1">Belongs to the CTP synthase family.</text>
</comment>
<organism>
    <name type="scientific">Methanospirillum hungatei JF-1 (strain ATCC 27890 / DSM 864 / NBRC 100397 / JF-1)</name>
    <dbReference type="NCBI Taxonomy" id="323259"/>
    <lineage>
        <taxon>Archaea</taxon>
        <taxon>Methanobacteriati</taxon>
        <taxon>Methanobacteriota</taxon>
        <taxon>Stenosarchaea group</taxon>
        <taxon>Methanomicrobia</taxon>
        <taxon>Methanomicrobiales</taxon>
        <taxon>Methanospirillaceae</taxon>
        <taxon>Methanospirillum</taxon>
    </lineage>
</organism>
<gene>
    <name evidence="1" type="primary">pyrG</name>
    <name type="ordered locus">Mhun_2528</name>
</gene>
<sequence length="527" mass="58467">MKYIFVTGGVMSGLGKGITAASIGRLLKNRGYQVTAVKIDPYLNIDAGTMNPAQHGEVFVLHDGGEVDLDLGNYERFLDIELNSSHNITTGKVYRMVIDKERRGDYLGQTVQIIPHITDQIKDCIRSAAEEKVFDGKPADICIVEVGGTVGDIESMPFLEAVRQMRSELATADRALVHVTLMPSDSMGDLKTKPTQHSIKALRELGIFTDIIVGRSERPLNSHTKKKLSSLCDIPQNGIISAATAPDIYQVPMELEKEGMADVLCQLLQLRKDGADPEWYRIVTREYTHRITIGIVSKYGKEDVYLSIKEALRHAGRKLSTEVSIRWLDAERVEPADLRECDGVLIPGGFGVRGIEGKINAIRLCREERIPLLGLCLGFQLSVVEFARNVLGIADACSSECGDGTAVITILPEQEGVENLGGTMRLGDCPVEIKSGTIAYKLYRQHEIIERHRHRYEVDPAYISRLEDAGLIFSGRNGNRMEIAEIEDHPFFFATQFHPEFRSRPTSPSPPFLGFVEACLKNRGKGE</sequence>
<feature type="chain" id="PRO_0000266277" description="CTP synthase">
    <location>
        <begin position="1"/>
        <end position="527"/>
    </location>
</feature>
<feature type="domain" description="Glutamine amidotransferase type-1" evidence="1">
    <location>
        <begin position="292"/>
        <end position="525"/>
    </location>
</feature>
<feature type="region of interest" description="Amidoligase domain" evidence="1">
    <location>
        <begin position="1"/>
        <end position="270"/>
    </location>
</feature>
<feature type="active site" description="Nucleophile; for glutamine hydrolysis" evidence="1">
    <location>
        <position position="376"/>
    </location>
</feature>
<feature type="active site" evidence="1">
    <location>
        <position position="498"/>
    </location>
</feature>
<feature type="active site" evidence="1">
    <location>
        <position position="500"/>
    </location>
</feature>
<feature type="binding site" evidence="1">
    <location>
        <position position="12"/>
    </location>
    <ligand>
        <name>CTP</name>
        <dbReference type="ChEBI" id="CHEBI:37563"/>
        <note>allosteric inhibitor</note>
    </ligand>
</feature>
<feature type="binding site" evidence="1">
    <location>
        <position position="12"/>
    </location>
    <ligand>
        <name>UTP</name>
        <dbReference type="ChEBI" id="CHEBI:46398"/>
    </ligand>
</feature>
<feature type="binding site" evidence="1">
    <location>
        <begin position="13"/>
        <end position="18"/>
    </location>
    <ligand>
        <name>ATP</name>
        <dbReference type="ChEBI" id="CHEBI:30616"/>
    </ligand>
</feature>
<feature type="binding site" evidence="1">
    <location>
        <position position="70"/>
    </location>
    <ligand>
        <name>ATP</name>
        <dbReference type="ChEBI" id="CHEBI:30616"/>
    </ligand>
</feature>
<feature type="binding site" evidence="1">
    <location>
        <position position="70"/>
    </location>
    <ligand>
        <name>Mg(2+)</name>
        <dbReference type="ChEBI" id="CHEBI:18420"/>
    </ligand>
</feature>
<feature type="binding site" evidence="1">
    <location>
        <position position="145"/>
    </location>
    <ligand>
        <name>Mg(2+)</name>
        <dbReference type="ChEBI" id="CHEBI:18420"/>
    </ligand>
</feature>
<feature type="binding site" evidence="1">
    <location>
        <begin position="152"/>
        <end position="154"/>
    </location>
    <ligand>
        <name>CTP</name>
        <dbReference type="ChEBI" id="CHEBI:37563"/>
        <note>allosteric inhibitor</note>
    </ligand>
</feature>
<feature type="binding site" evidence="1">
    <location>
        <begin position="191"/>
        <end position="196"/>
    </location>
    <ligand>
        <name>CTP</name>
        <dbReference type="ChEBI" id="CHEBI:37563"/>
        <note>allosteric inhibitor</note>
    </ligand>
</feature>
<feature type="binding site" evidence="1">
    <location>
        <begin position="191"/>
        <end position="196"/>
    </location>
    <ligand>
        <name>UTP</name>
        <dbReference type="ChEBI" id="CHEBI:46398"/>
    </ligand>
</feature>
<feature type="binding site" evidence="1">
    <location>
        <position position="227"/>
    </location>
    <ligand>
        <name>CTP</name>
        <dbReference type="ChEBI" id="CHEBI:37563"/>
        <note>allosteric inhibitor</note>
    </ligand>
</feature>
<feature type="binding site" evidence="1">
    <location>
        <position position="227"/>
    </location>
    <ligand>
        <name>UTP</name>
        <dbReference type="ChEBI" id="CHEBI:46398"/>
    </ligand>
</feature>
<feature type="binding site" evidence="1">
    <location>
        <position position="349"/>
    </location>
    <ligand>
        <name>L-glutamine</name>
        <dbReference type="ChEBI" id="CHEBI:58359"/>
    </ligand>
</feature>
<feature type="binding site" evidence="1">
    <location>
        <begin position="377"/>
        <end position="380"/>
    </location>
    <ligand>
        <name>L-glutamine</name>
        <dbReference type="ChEBI" id="CHEBI:58359"/>
    </ligand>
</feature>
<feature type="binding site" evidence="1">
    <location>
        <position position="400"/>
    </location>
    <ligand>
        <name>L-glutamine</name>
        <dbReference type="ChEBI" id="CHEBI:58359"/>
    </ligand>
</feature>
<feature type="binding site" evidence="1">
    <location>
        <position position="455"/>
    </location>
    <ligand>
        <name>L-glutamine</name>
        <dbReference type="ChEBI" id="CHEBI:58359"/>
    </ligand>
</feature>
<reference key="1">
    <citation type="journal article" date="2016" name="Stand. Genomic Sci.">
        <title>Complete genome sequence of Methanospirillum hungatei type strain JF1.</title>
        <authorList>
            <person name="Gunsalus R.P."/>
            <person name="Cook L.E."/>
            <person name="Crable B."/>
            <person name="Rohlin L."/>
            <person name="McDonald E."/>
            <person name="Mouttaki H."/>
            <person name="Sieber J.R."/>
            <person name="Poweleit N."/>
            <person name="Zhou H."/>
            <person name="Lapidus A.L."/>
            <person name="Daligault H.E."/>
            <person name="Land M."/>
            <person name="Gilna P."/>
            <person name="Ivanova N."/>
            <person name="Kyrpides N."/>
            <person name="Culley D.E."/>
            <person name="McInerney M.J."/>
        </authorList>
    </citation>
    <scope>NUCLEOTIDE SEQUENCE [LARGE SCALE GENOMIC DNA]</scope>
    <source>
        <strain>ATCC 27890 / DSM 864 / NBRC 100397 / JF-1</strain>
    </source>
</reference>
<proteinExistence type="inferred from homology"/>
<evidence type="ECO:0000255" key="1">
    <source>
        <dbReference type="HAMAP-Rule" id="MF_01227"/>
    </source>
</evidence>
<name>PYRG_METHJ</name>